<feature type="chain" id="PRO_0000099712" description="Uncharacterized 8.3 kDa protein">
    <location>
        <begin position="1"/>
        <end position="78"/>
    </location>
</feature>
<feature type="region of interest" description="Disordered" evidence="1">
    <location>
        <begin position="58"/>
        <end position="78"/>
    </location>
</feature>
<sequence length="78" mass="8342">MDTASVIIDLTVSSLGGYNKCLNIKHAKSQCRPSSLLISSLENVSPGIRPRFLSQNMEANDPEKKIPSTAAKAISLSP</sequence>
<proteinExistence type="predicted"/>
<organism>
    <name type="scientific">Vaccinia virus (strain Copenhagen)</name>
    <name type="common">VACV</name>
    <dbReference type="NCBI Taxonomy" id="10249"/>
    <lineage>
        <taxon>Viruses</taxon>
        <taxon>Varidnaviria</taxon>
        <taxon>Bamfordvirae</taxon>
        <taxon>Nucleocytoviricota</taxon>
        <taxon>Pokkesviricetes</taxon>
        <taxon>Chitovirales</taxon>
        <taxon>Poxviridae</taxon>
        <taxon>Chordopoxvirinae</taxon>
        <taxon>Orthopoxvirus</taxon>
        <taxon>Vaccinia virus</taxon>
    </lineage>
</organism>
<keyword id="KW-1185">Reference proteome</keyword>
<evidence type="ECO:0000256" key="1">
    <source>
        <dbReference type="SAM" id="MobiDB-lite"/>
    </source>
</evidence>
<protein>
    <recommendedName>
        <fullName>Uncharacterized 8.3 kDa protein</fullName>
    </recommendedName>
</protein>
<organismHost>
    <name type="scientific">Homo sapiens</name>
    <name type="common">Human</name>
    <dbReference type="NCBI Taxonomy" id="9606"/>
</organismHost>
<name>YVFB_VACCC</name>
<gene>
    <name type="ORF">F ORF B</name>
</gene>
<accession>P20560</accession>
<reference key="1">
    <citation type="journal article" date="1990" name="Virology">
        <title>The complete DNA sequence of vaccinia virus.</title>
        <authorList>
            <person name="Goebel S.J."/>
            <person name="Johnson G.P."/>
            <person name="Perkus M.E."/>
            <person name="Davis S.W."/>
            <person name="Winslow J.P."/>
            <person name="Paoletti E."/>
        </authorList>
    </citation>
    <scope>NUCLEOTIDE SEQUENCE [LARGE SCALE GENOMIC DNA]</scope>
</reference>
<reference key="2">
    <citation type="journal article" date="1990" name="Virology">
        <title>Appendix to 'The complete DNA sequence of vaccinia virus'.</title>
        <authorList>
            <person name="Goebel S.J."/>
            <person name="Johnson G.P."/>
            <person name="Perkus M.E."/>
            <person name="Davis S.W."/>
            <person name="Winslow J.P."/>
            <person name="Paoletti E."/>
        </authorList>
    </citation>
    <scope>COMPLETE GENOME</scope>
</reference>
<dbReference type="EMBL" id="M35027">
    <property type="protein sequence ID" value="AAA48019.1"/>
    <property type="molecule type" value="Genomic_DNA"/>
</dbReference>
<dbReference type="PIR" id="A42506">
    <property type="entry name" value="A42506"/>
</dbReference>
<dbReference type="Proteomes" id="UP000008269">
    <property type="component" value="Segment"/>
</dbReference>